<organism>
    <name type="scientific">Kluyveromyces marxianus</name>
    <name type="common">Yeast</name>
    <name type="synonym">Candida kefyr</name>
    <dbReference type="NCBI Taxonomy" id="4911"/>
    <lineage>
        <taxon>Eukaryota</taxon>
        <taxon>Fungi</taxon>
        <taxon>Dikarya</taxon>
        <taxon>Ascomycota</taxon>
        <taxon>Saccharomycotina</taxon>
        <taxon>Saccharomycetes</taxon>
        <taxon>Saccharomycetales</taxon>
        <taxon>Saccharomycetaceae</taxon>
        <taxon>Kluyveromyces</taxon>
    </lineage>
</organism>
<gene>
    <name type="primary">SSB1</name>
</gene>
<name>SSB1_KLUMA</name>
<dbReference type="EC" id="3.6.4.10"/>
<dbReference type="EMBL" id="X59963">
    <property type="protein sequence ID" value="CAA42589.1"/>
    <property type="molecule type" value="Genomic_DNA"/>
</dbReference>
<dbReference type="EMBL" id="AJ617308">
    <property type="protein sequence ID" value="CAE84429.1"/>
    <property type="molecule type" value="Genomic_DNA"/>
</dbReference>
<dbReference type="PIR" id="S30562">
    <property type="entry name" value="S30562"/>
</dbReference>
<dbReference type="SMR" id="P41770"/>
<dbReference type="VEuPathDB" id="FungiDB:KLMA_50592"/>
<dbReference type="GO" id="GO:0005737">
    <property type="term" value="C:cytoplasm"/>
    <property type="evidence" value="ECO:0007669"/>
    <property type="project" value="UniProtKB-SubCell"/>
</dbReference>
<dbReference type="GO" id="GO:0005524">
    <property type="term" value="F:ATP binding"/>
    <property type="evidence" value="ECO:0007669"/>
    <property type="project" value="UniProtKB-KW"/>
</dbReference>
<dbReference type="GO" id="GO:0016887">
    <property type="term" value="F:ATP hydrolysis activity"/>
    <property type="evidence" value="ECO:0007669"/>
    <property type="project" value="RHEA"/>
</dbReference>
<dbReference type="GO" id="GO:0140662">
    <property type="term" value="F:ATP-dependent protein folding chaperone"/>
    <property type="evidence" value="ECO:0007669"/>
    <property type="project" value="InterPro"/>
</dbReference>
<dbReference type="GO" id="GO:0006412">
    <property type="term" value="P:translation"/>
    <property type="evidence" value="ECO:0007669"/>
    <property type="project" value="UniProtKB-KW"/>
</dbReference>
<dbReference type="CDD" id="cd24093">
    <property type="entry name" value="ASKHA_NBD_HSP70_Ssb"/>
    <property type="match status" value="1"/>
</dbReference>
<dbReference type="FunFam" id="3.90.640.10:FF:000002">
    <property type="entry name" value="Heat shock 70 kDa"/>
    <property type="match status" value="1"/>
</dbReference>
<dbReference type="FunFam" id="3.30.420.40:FF:000172">
    <property type="entry name" value="Heat shock 70 kDa protein"/>
    <property type="match status" value="1"/>
</dbReference>
<dbReference type="FunFam" id="1.20.1270.10:FF:000014">
    <property type="entry name" value="Heat shock protein 70"/>
    <property type="match status" value="1"/>
</dbReference>
<dbReference type="FunFam" id="3.30.420.40:FF:000026">
    <property type="entry name" value="Heat shock protein 70"/>
    <property type="match status" value="1"/>
</dbReference>
<dbReference type="FunFam" id="2.60.34.10:FF:000004">
    <property type="entry name" value="Heat shock protein SSB1"/>
    <property type="match status" value="1"/>
</dbReference>
<dbReference type="FunFam" id="3.30.30.30:FF:000005">
    <property type="entry name" value="Heat shock protein ssb1"/>
    <property type="match status" value="1"/>
</dbReference>
<dbReference type="Gene3D" id="1.20.1270.10">
    <property type="match status" value="1"/>
</dbReference>
<dbReference type="Gene3D" id="3.30.30.30">
    <property type="match status" value="1"/>
</dbReference>
<dbReference type="Gene3D" id="3.30.420.40">
    <property type="match status" value="2"/>
</dbReference>
<dbReference type="Gene3D" id="3.90.640.10">
    <property type="entry name" value="Actin, Chain A, domain 4"/>
    <property type="match status" value="1"/>
</dbReference>
<dbReference type="Gene3D" id="2.60.34.10">
    <property type="entry name" value="Substrate Binding Domain Of DNAk, Chain A, domain 1"/>
    <property type="match status" value="1"/>
</dbReference>
<dbReference type="InterPro" id="IPR043129">
    <property type="entry name" value="ATPase_NBD"/>
</dbReference>
<dbReference type="InterPro" id="IPR018181">
    <property type="entry name" value="Heat_shock_70_CS"/>
</dbReference>
<dbReference type="InterPro" id="IPR029048">
    <property type="entry name" value="HSP70_C_sf"/>
</dbReference>
<dbReference type="InterPro" id="IPR029047">
    <property type="entry name" value="HSP70_peptide-bd_sf"/>
</dbReference>
<dbReference type="InterPro" id="IPR013126">
    <property type="entry name" value="Hsp_70_fam"/>
</dbReference>
<dbReference type="NCBIfam" id="NF001413">
    <property type="entry name" value="PRK00290.1"/>
    <property type="match status" value="1"/>
</dbReference>
<dbReference type="PANTHER" id="PTHR19375">
    <property type="entry name" value="HEAT SHOCK PROTEIN 70KDA"/>
    <property type="match status" value="1"/>
</dbReference>
<dbReference type="Pfam" id="PF00012">
    <property type="entry name" value="HSP70"/>
    <property type="match status" value="1"/>
</dbReference>
<dbReference type="PRINTS" id="PR00301">
    <property type="entry name" value="HEATSHOCK70"/>
</dbReference>
<dbReference type="SUPFAM" id="SSF53067">
    <property type="entry name" value="Actin-like ATPase domain"/>
    <property type="match status" value="2"/>
</dbReference>
<dbReference type="SUPFAM" id="SSF100934">
    <property type="entry name" value="Heat shock protein 70kD (HSP70), C-terminal subdomain"/>
    <property type="match status" value="1"/>
</dbReference>
<dbReference type="SUPFAM" id="SSF100920">
    <property type="entry name" value="Heat shock protein 70kD (HSP70), peptide-binding domain"/>
    <property type="match status" value="1"/>
</dbReference>
<dbReference type="PROSITE" id="PS00297">
    <property type="entry name" value="HSP70_1"/>
    <property type="match status" value="1"/>
</dbReference>
<dbReference type="PROSITE" id="PS00329">
    <property type="entry name" value="HSP70_2"/>
    <property type="match status" value="1"/>
</dbReference>
<dbReference type="PROSITE" id="PS01036">
    <property type="entry name" value="HSP70_3"/>
    <property type="match status" value="1"/>
</dbReference>
<comment type="function">
    <text evidence="2">Ribosome-bound, Hsp70-type chaperone that assists in the cotranslational folding of newly synthesized proteins in the cytosol. Stimulates folding by interacting with nascent chains, binding to short, largely hydrophobic sequences exposed by unfolded proteins, thereby stabilizing longer, more slowly translated, and aggregation-prone nascent polypeptides and domains that cannot fold stably until fully synthesized. The Hsp70-protein substrate interaction depends on ATP-binding and on allosteric regulation between the NBD and the SBD. The ATP-bound state is characterized by a fast exchange rate of substrate (low affinity state), while in the ADP-bound state exchange is much slower (high affinity state). During the Hsp70 cycle, the chaperone switches between the ATP-bound state (open conformation) and the ADP-bound state (closed conformation) by major conformational rearrangements involving mainly the lid domain. Ssb cooperates with a specific Hsp40/Hsp70 co-chaperone termed the ribosome-associated complex (RAC), which stimulates the ATPase activity of the ribosome-associated pool of Ssbs and switches it to the high affinity substrate binding state. Hsp110 chaperone SSE1 and FES1 act as nucleotide exchange factors that cause substrate release.</text>
</comment>
<comment type="catalytic activity">
    <reaction evidence="2">
        <text>ATP + H2O = ADP + phosphate + H(+)</text>
        <dbReference type="Rhea" id="RHEA:13065"/>
        <dbReference type="ChEBI" id="CHEBI:15377"/>
        <dbReference type="ChEBI" id="CHEBI:15378"/>
        <dbReference type="ChEBI" id="CHEBI:30616"/>
        <dbReference type="ChEBI" id="CHEBI:43474"/>
        <dbReference type="ChEBI" id="CHEBI:456216"/>
        <dbReference type="EC" id="3.6.4.10"/>
    </reaction>
</comment>
<comment type="subunit">
    <text evidence="2">Binds to ribosomes. Binds close to the ribosomal tunnel exit via contacts with both ribosomal proteins and rRNA. Directly interacts with nascent polypeptides. This interaction is dependent on the ribosome-associated complex (RAC). Interacts with SSE1. Interacts with FES1.</text>
</comment>
<comment type="subcellular location">
    <subcellularLocation>
        <location evidence="2">Cytoplasm</location>
    </subcellularLocation>
    <text evidence="2">Associated with translating ribosomes.</text>
</comment>
<comment type="similarity">
    <text evidence="3">Belongs to the heat shock protein 70 family. Ssb-type Hsp70 subfamily.</text>
</comment>
<protein>
    <recommendedName>
        <fullName>Ribosome-associated molecular chaperone SSB1</fullName>
        <ecNumber>3.6.4.10</ecNumber>
    </recommendedName>
    <alternativeName>
        <fullName>Heat shock protein SSB1</fullName>
    </alternativeName>
    <alternativeName>
        <fullName>Hsp70 chaperone Ssb</fullName>
    </alternativeName>
</protein>
<accession>P41770</accession>
<accession>Q707X6</accession>
<sequence length="613" mass="66087">MAEGVFPGAIGIDLGTTYSCVATYENSVEIIANEQGNRVTPSFVAFTPEERLIGDAAKNQAALNPKNTVFDAKRLIGRRFDEESVQSDMKTWPFKVIDSNGAPLIEVEYLGETKTFSPQEISSMVLTKMKEIAEAKIGKKVEKAVVTVPAYFNDAQRQATKDAGAIAGLNVLRIINEPTAAAIAYGVGAGNSEKERHVLIFDLGGGTFDVSLLHIAGGVYTVKSTSGNTHLGGQDFDTNLLEHFKTEFKKKTGADISGDARALRRLRTAAERAKRTLSSVAQTTVEVDSLFDGEDFEATITRARFEDINAALFKSTLEPVEQVLKDAKISKSQIDEVVLVGGSTRIPKVQKLLSDFFDGKQLEKSINPDEAVAYGAAVQGAILTGQSTSDETKDLLLLDVAPLSLGVGMAGDVFGVVVPRNTTVPTIKRRTFTTVADHQTTVTFPVYQGERVNCKENTLLGEFDLKGVPPMPAGEPVLEAIFEVDANGILKVTAVEKSTGKSANITISNAIGRLSSEEIEQMVNQAEEFKAADEAFAKKHEARQRLESYISSVQQTVTDPVLSAKIKRNAKAKVEAALADAFSTLQIEDASADDLRKAEVGLKRAVTKAMSTR</sequence>
<proteinExistence type="inferred from homology"/>
<reference key="1">
    <citation type="submission" date="1991-05" db="EMBL/GenBank/DDBJ databases">
        <authorList>
            <person name="Iborra F."/>
        </authorList>
    </citation>
    <scope>NUCLEOTIDE SEQUENCE [GENOMIC DNA]</scope>
    <source>
        <strain>ATCC 12424 / NRRL Y-610</strain>
    </source>
</reference>
<reference key="2">
    <citation type="journal article" date="2004" name="Proc. Natl. Acad. Sci. U.S.A.">
        <title>Evolution of the MAT locus and its Ho endonuclease in yeast species.</title>
        <authorList>
            <person name="Butler G."/>
            <person name="Kenny C."/>
            <person name="Fagan A."/>
            <person name="Kurischko C."/>
            <person name="Gaillardin C."/>
            <person name="Wolfe K.H."/>
        </authorList>
    </citation>
    <scope>NUCLEOTIDE SEQUENCE [GENOMIC DNA]</scope>
    <source>
        <strain>ATCC 200963 / CBS 712 / NBRC 10005 / NRRL Y-8281 / HA 63</strain>
    </source>
</reference>
<keyword id="KW-0067">ATP-binding</keyword>
<keyword id="KW-0143">Chaperone</keyword>
<keyword id="KW-0963">Cytoplasm</keyword>
<keyword id="KW-0378">Hydrolase</keyword>
<keyword id="KW-0547">Nucleotide-binding</keyword>
<keyword id="KW-0648">Protein biosynthesis</keyword>
<feature type="chain" id="PRO_0000078371" description="Ribosome-associated molecular chaperone SSB1">
    <location>
        <begin position="1"/>
        <end position="613"/>
    </location>
</feature>
<feature type="region of interest" description="Nucleotide binding domain (NBD)" evidence="1">
    <location>
        <begin position="1"/>
        <end position="391"/>
    </location>
</feature>
<feature type="region of interest" description="Inter-domain linker" evidence="1">
    <location>
        <begin position="392"/>
        <end position="402"/>
    </location>
</feature>
<feature type="region of interest" description="Substrate binding domain (SBD)" evidence="1">
    <location>
        <begin position="403"/>
        <end position="613"/>
    </location>
</feature>
<feature type="region of interest" description="Lid domain (SBDalpha)" evidence="1">
    <location>
        <begin position="516"/>
        <end position="612"/>
    </location>
</feature>
<feature type="short sequence motif" description="Nuclear export signal" evidence="2">
    <location>
        <begin position="574"/>
        <end position="582"/>
    </location>
</feature>
<feature type="binding site" evidence="1">
    <location>
        <begin position="16"/>
        <end position="18"/>
    </location>
    <ligand>
        <name>ATP</name>
        <dbReference type="ChEBI" id="CHEBI:30616"/>
    </ligand>
</feature>
<feature type="binding site" evidence="1">
    <location>
        <position position="73"/>
    </location>
    <ligand>
        <name>ATP</name>
        <dbReference type="ChEBI" id="CHEBI:30616"/>
    </ligand>
</feature>
<feature type="binding site" evidence="1">
    <location>
        <begin position="205"/>
        <end position="207"/>
    </location>
    <ligand>
        <name>ATP</name>
        <dbReference type="ChEBI" id="CHEBI:30616"/>
    </ligand>
</feature>
<feature type="binding site" evidence="1">
    <location>
        <begin position="271"/>
        <end position="278"/>
    </location>
    <ligand>
        <name>ATP</name>
        <dbReference type="ChEBI" id="CHEBI:30616"/>
    </ligand>
</feature>
<feature type="binding site" evidence="1">
    <location>
        <position position="342"/>
    </location>
    <ligand>
        <name>ATP</name>
        <dbReference type="ChEBI" id="CHEBI:30616"/>
    </ligand>
</feature>
<feature type="sequence conflict" description="In Ref. 2; CAE84429." evidence="3" ref="2">
    <original>V</original>
    <variation>L</variation>
    <location>
        <position position="187"/>
    </location>
</feature>
<feature type="sequence conflict" description="In Ref. 2; CAE84429." evidence="3" ref="2">
    <original>N</original>
    <variation>K</variation>
    <location>
        <position position="191"/>
    </location>
</feature>
<feature type="sequence conflict" description="In Ref. 2; CAE84429." evidence="3" ref="2">
    <original>T</original>
    <variation>A</variation>
    <location>
        <position position="246"/>
    </location>
</feature>
<feature type="sequence conflict" description="In Ref. 2; CAE84429." evidence="3" ref="2">
    <original>Q</original>
    <variation>E</variation>
    <location>
        <position position="554"/>
    </location>
</feature>
<evidence type="ECO:0000250" key="1">
    <source>
        <dbReference type="UniProtKB" id="G0SCU5"/>
    </source>
</evidence>
<evidence type="ECO:0000250" key="2">
    <source>
        <dbReference type="UniProtKB" id="P11484"/>
    </source>
</evidence>
<evidence type="ECO:0000305" key="3"/>